<accession>Q5JY77</accession>
<accession>O43168</accession>
<accession>Q96LA1</accession>
<organism>
    <name type="scientific">Homo sapiens</name>
    <name type="common">Human</name>
    <dbReference type="NCBI Taxonomy" id="9606"/>
    <lineage>
        <taxon>Eukaryota</taxon>
        <taxon>Metazoa</taxon>
        <taxon>Chordata</taxon>
        <taxon>Craniata</taxon>
        <taxon>Vertebrata</taxon>
        <taxon>Euteleostomi</taxon>
        <taxon>Mammalia</taxon>
        <taxon>Eutheria</taxon>
        <taxon>Euarchontoglires</taxon>
        <taxon>Primates</taxon>
        <taxon>Haplorrhini</taxon>
        <taxon>Catarrhini</taxon>
        <taxon>Hominidae</taxon>
        <taxon>Homo</taxon>
    </lineage>
</organism>
<gene>
    <name type="primary">GPRASP1</name>
    <name type="synonym">GASP</name>
    <name type="synonym">KIAA0443</name>
</gene>
<sequence>MTGAEIESGAQVKPEKKPGEEVVGGAEIENDVPLVVRPKVRTQAQIMPGARPKNKSKVMPGASTKVETSAVGGARPKSKAKAIPVSRFKEEAQMWAQPRFGAERLSKTERNSQTNIIASPLVSTDSVLVAKTKYLSEDRELVNTDTESFPRRKAHYQAGFQPSFRSKEETNMGSWCCPRPTSKQEASPNSDFKWVDKSVSSLFWSGDEVTAKFHPGNRVKDSNRSMHMANQEANTMSRSQTNQELYIASSSGSEDESVKTPWFWARDKTNTWSGPREDPNSRSRFRSKKEVYVESSSGSEHEDHLESWFGAGKEAKFRSKMRAGKEANNRARHRAKREACIDFMPGSIDVIKKESCFWPEENANTFSRPMIKKEARARAMTKEEAKTKARARAKQEARSEEEALIGTWFWATDESSMADEASIESSLQVEDESIIGSWFWTEEEASMGTGASSKSRPRTDGERIGDSLFGAREKTSMKTGAEATSESILAADDEQVIIGSWFWAGEEVNQEAEEETIFGSWFWVIDAASVESGVGVSCESRTRSEEEEVIGPWFWSGEQVDIEAGIGEEARPGAEEETIFGSWFWAENQTYMDCRAETSCDTMQGAEEEEPIIGSWFWTRVEACVEGDVNSKSSLEDKEEAMIPCFGAKEEVSMKHGTGVRCRFMAGAEETNNKSCFWAEKEPCMYPAGGGSWKSRPEEEEDIVNSWFWSRKYTKPEAIIGSWLWATEESNIDGTGEKAKLLTEEETIINSWFWKEDEAISEATDREESRPEAEEGDIIGSWFWAGEEDRLEPAAETREEDRLAAEKEGIVGSWFGAREETIRREAGSCSKSSPKAEEEEVIIGSWFWEEEASPEAVAGVGFESKPGTEEEEITVGSWFWPEEEASIQAGSQAVEEMESETEEETIFGSWFWDGKEVSEEAGPCCVSKPEDDEEMIVESWFWSRDKAIKETGTVATCESKPENEEGAIVGSWFEAEDEVDNRTDNGSNCGSRTLADEDEAIVGSWFWAGDEAHFESNPSPVFRAICRSTCSVEQEPDPSRRPQSWEEVTVQFKPGPWGRVGFPSISPFRFPKEAASLFCEMFGGKPRNMVLSPEGEDQESLLQPDQPSPEFPFQYDPSYRSVQEIREHLRAKESTEPESSSCNCIQCELKIGSEEFEELLLLMEKIRDPFIHEISKIAMGMRSASQFTRDFIRDSGVVSLIETLLNYPSSRVRTSFLENMIRMAPPYPNLNIIQTYICKVCEETLAYSVDSPEQLSGIRMIRHLTTTTDYHTLVANYMSGFLSLLATGNAKTRFHVLKMLLNLSENLFMTKELLSAEAVSEFIGLFNREETNDNIQIVLAIFENIGNNIKKETVFSDDDFNIEPLISAFHKVEKFAKELQGKTDNQNDPEGDQEN</sequence>
<proteinExistence type="evidence at protein level"/>
<reference key="1">
    <citation type="journal article" date="1997" name="DNA Res.">
        <title>Prediction of the coding sequences of unidentified human genes. VIII. 78 new cDNA clones from brain which code for large proteins in vitro.</title>
        <authorList>
            <person name="Ishikawa K."/>
            <person name="Nagase T."/>
            <person name="Nakajima D."/>
            <person name="Seki N."/>
            <person name="Ohira M."/>
            <person name="Miyajima N."/>
            <person name="Tanaka A."/>
            <person name="Kotani H."/>
            <person name="Nomura N."/>
            <person name="Ohara O."/>
        </authorList>
    </citation>
    <scope>NUCLEOTIDE SEQUENCE [LARGE SCALE MRNA]</scope>
    <scope>VARIANT GLY-315</scope>
    <source>
        <tissue>Brain</tissue>
    </source>
</reference>
<reference key="2">
    <citation type="journal article" date="2005" name="Nature">
        <title>The DNA sequence of the human X chromosome.</title>
        <authorList>
            <person name="Ross M.T."/>
            <person name="Grafham D.V."/>
            <person name="Coffey A.J."/>
            <person name="Scherer S."/>
            <person name="McLay K."/>
            <person name="Muzny D."/>
            <person name="Platzer M."/>
            <person name="Howell G.R."/>
            <person name="Burrows C."/>
            <person name="Bird C.P."/>
            <person name="Frankish A."/>
            <person name="Lovell F.L."/>
            <person name="Howe K.L."/>
            <person name="Ashurst J.L."/>
            <person name="Fulton R.S."/>
            <person name="Sudbrak R."/>
            <person name="Wen G."/>
            <person name="Jones M.C."/>
            <person name="Hurles M.E."/>
            <person name="Andrews T.D."/>
            <person name="Scott C.E."/>
            <person name="Searle S."/>
            <person name="Ramser J."/>
            <person name="Whittaker A."/>
            <person name="Deadman R."/>
            <person name="Carter N.P."/>
            <person name="Hunt S.E."/>
            <person name="Chen R."/>
            <person name="Cree A."/>
            <person name="Gunaratne P."/>
            <person name="Havlak P."/>
            <person name="Hodgson A."/>
            <person name="Metzker M.L."/>
            <person name="Richards S."/>
            <person name="Scott G."/>
            <person name="Steffen D."/>
            <person name="Sodergren E."/>
            <person name="Wheeler D.A."/>
            <person name="Worley K.C."/>
            <person name="Ainscough R."/>
            <person name="Ambrose K.D."/>
            <person name="Ansari-Lari M.A."/>
            <person name="Aradhya S."/>
            <person name="Ashwell R.I."/>
            <person name="Babbage A.K."/>
            <person name="Bagguley C.L."/>
            <person name="Ballabio A."/>
            <person name="Banerjee R."/>
            <person name="Barker G.E."/>
            <person name="Barlow K.F."/>
            <person name="Barrett I.P."/>
            <person name="Bates K.N."/>
            <person name="Beare D.M."/>
            <person name="Beasley H."/>
            <person name="Beasley O."/>
            <person name="Beck A."/>
            <person name="Bethel G."/>
            <person name="Blechschmidt K."/>
            <person name="Brady N."/>
            <person name="Bray-Allen S."/>
            <person name="Bridgeman A.M."/>
            <person name="Brown A.J."/>
            <person name="Brown M.J."/>
            <person name="Bonnin D."/>
            <person name="Bruford E.A."/>
            <person name="Buhay C."/>
            <person name="Burch P."/>
            <person name="Burford D."/>
            <person name="Burgess J."/>
            <person name="Burrill W."/>
            <person name="Burton J."/>
            <person name="Bye J.M."/>
            <person name="Carder C."/>
            <person name="Carrel L."/>
            <person name="Chako J."/>
            <person name="Chapman J.C."/>
            <person name="Chavez D."/>
            <person name="Chen E."/>
            <person name="Chen G."/>
            <person name="Chen Y."/>
            <person name="Chen Z."/>
            <person name="Chinault C."/>
            <person name="Ciccodicola A."/>
            <person name="Clark S.Y."/>
            <person name="Clarke G."/>
            <person name="Clee C.M."/>
            <person name="Clegg S."/>
            <person name="Clerc-Blankenburg K."/>
            <person name="Clifford K."/>
            <person name="Cobley V."/>
            <person name="Cole C.G."/>
            <person name="Conquer J.S."/>
            <person name="Corby N."/>
            <person name="Connor R.E."/>
            <person name="David R."/>
            <person name="Davies J."/>
            <person name="Davis C."/>
            <person name="Davis J."/>
            <person name="Delgado O."/>
            <person name="Deshazo D."/>
            <person name="Dhami P."/>
            <person name="Ding Y."/>
            <person name="Dinh H."/>
            <person name="Dodsworth S."/>
            <person name="Draper H."/>
            <person name="Dugan-Rocha S."/>
            <person name="Dunham A."/>
            <person name="Dunn M."/>
            <person name="Durbin K.J."/>
            <person name="Dutta I."/>
            <person name="Eades T."/>
            <person name="Ellwood M."/>
            <person name="Emery-Cohen A."/>
            <person name="Errington H."/>
            <person name="Evans K.L."/>
            <person name="Faulkner L."/>
            <person name="Francis F."/>
            <person name="Frankland J."/>
            <person name="Fraser A.E."/>
            <person name="Galgoczy P."/>
            <person name="Gilbert J."/>
            <person name="Gill R."/>
            <person name="Gloeckner G."/>
            <person name="Gregory S.G."/>
            <person name="Gribble S."/>
            <person name="Griffiths C."/>
            <person name="Grocock R."/>
            <person name="Gu Y."/>
            <person name="Gwilliam R."/>
            <person name="Hamilton C."/>
            <person name="Hart E.A."/>
            <person name="Hawes A."/>
            <person name="Heath P.D."/>
            <person name="Heitmann K."/>
            <person name="Hennig S."/>
            <person name="Hernandez J."/>
            <person name="Hinzmann B."/>
            <person name="Ho S."/>
            <person name="Hoffs M."/>
            <person name="Howden P.J."/>
            <person name="Huckle E.J."/>
            <person name="Hume J."/>
            <person name="Hunt P.J."/>
            <person name="Hunt A.R."/>
            <person name="Isherwood J."/>
            <person name="Jacob L."/>
            <person name="Johnson D."/>
            <person name="Jones S."/>
            <person name="de Jong P.J."/>
            <person name="Joseph S.S."/>
            <person name="Keenan S."/>
            <person name="Kelly S."/>
            <person name="Kershaw J.K."/>
            <person name="Khan Z."/>
            <person name="Kioschis P."/>
            <person name="Klages S."/>
            <person name="Knights A.J."/>
            <person name="Kosiura A."/>
            <person name="Kovar-Smith C."/>
            <person name="Laird G.K."/>
            <person name="Langford C."/>
            <person name="Lawlor S."/>
            <person name="Leversha M."/>
            <person name="Lewis L."/>
            <person name="Liu W."/>
            <person name="Lloyd C."/>
            <person name="Lloyd D.M."/>
            <person name="Loulseged H."/>
            <person name="Loveland J.E."/>
            <person name="Lovell J.D."/>
            <person name="Lozado R."/>
            <person name="Lu J."/>
            <person name="Lyne R."/>
            <person name="Ma J."/>
            <person name="Maheshwari M."/>
            <person name="Matthews L.H."/>
            <person name="McDowall J."/>
            <person name="McLaren S."/>
            <person name="McMurray A."/>
            <person name="Meidl P."/>
            <person name="Meitinger T."/>
            <person name="Milne S."/>
            <person name="Miner G."/>
            <person name="Mistry S.L."/>
            <person name="Morgan M."/>
            <person name="Morris S."/>
            <person name="Mueller I."/>
            <person name="Mullikin J.C."/>
            <person name="Nguyen N."/>
            <person name="Nordsiek G."/>
            <person name="Nyakatura G."/>
            <person name="O'dell C.N."/>
            <person name="Okwuonu G."/>
            <person name="Palmer S."/>
            <person name="Pandian R."/>
            <person name="Parker D."/>
            <person name="Parrish J."/>
            <person name="Pasternak S."/>
            <person name="Patel D."/>
            <person name="Pearce A.V."/>
            <person name="Pearson D.M."/>
            <person name="Pelan S.E."/>
            <person name="Perez L."/>
            <person name="Porter K.M."/>
            <person name="Ramsey Y."/>
            <person name="Reichwald K."/>
            <person name="Rhodes S."/>
            <person name="Ridler K.A."/>
            <person name="Schlessinger D."/>
            <person name="Schueler M.G."/>
            <person name="Sehra H.K."/>
            <person name="Shaw-Smith C."/>
            <person name="Shen H."/>
            <person name="Sheridan E.M."/>
            <person name="Shownkeen R."/>
            <person name="Skuce C.D."/>
            <person name="Smith M.L."/>
            <person name="Sotheran E.C."/>
            <person name="Steingruber H.E."/>
            <person name="Steward C.A."/>
            <person name="Storey R."/>
            <person name="Swann R.M."/>
            <person name="Swarbreck D."/>
            <person name="Tabor P.E."/>
            <person name="Taudien S."/>
            <person name="Taylor T."/>
            <person name="Teague B."/>
            <person name="Thomas K."/>
            <person name="Thorpe A."/>
            <person name="Timms K."/>
            <person name="Tracey A."/>
            <person name="Trevanion S."/>
            <person name="Tromans A.C."/>
            <person name="d'Urso M."/>
            <person name="Verduzco D."/>
            <person name="Villasana D."/>
            <person name="Waldron L."/>
            <person name="Wall M."/>
            <person name="Wang Q."/>
            <person name="Warren J."/>
            <person name="Warry G.L."/>
            <person name="Wei X."/>
            <person name="West A."/>
            <person name="Whitehead S.L."/>
            <person name="Whiteley M.N."/>
            <person name="Wilkinson J.E."/>
            <person name="Willey D.L."/>
            <person name="Williams G."/>
            <person name="Williams L."/>
            <person name="Williamson A."/>
            <person name="Williamson H."/>
            <person name="Wilming L."/>
            <person name="Woodmansey R.L."/>
            <person name="Wray P.W."/>
            <person name="Yen J."/>
            <person name="Zhang J."/>
            <person name="Zhou J."/>
            <person name="Zoghbi H."/>
            <person name="Zorilla S."/>
            <person name="Buck D."/>
            <person name="Reinhardt R."/>
            <person name="Poustka A."/>
            <person name="Rosenthal A."/>
            <person name="Lehrach H."/>
            <person name="Meindl A."/>
            <person name="Minx P.J."/>
            <person name="Hillier L.W."/>
            <person name="Willard H.F."/>
            <person name="Wilson R.K."/>
            <person name="Waterston R.H."/>
            <person name="Rice C.M."/>
            <person name="Vaudin M."/>
            <person name="Coulson A."/>
            <person name="Nelson D.L."/>
            <person name="Weinstock G."/>
            <person name="Sulston J.E."/>
            <person name="Durbin R.M."/>
            <person name="Hubbard T."/>
            <person name="Gibbs R.A."/>
            <person name="Beck S."/>
            <person name="Rogers J."/>
            <person name="Bentley D.R."/>
        </authorList>
    </citation>
    <scope>NUCLEOTIDE SEQUENCE [LARGE SCALE GENOMIC DNA]</scope>
</reference>
<reference key="3">
    <citation type="journal article" date="2004" name="Genome Res.">
        <title>The status, quality, and expansion of the NIH full-length cDNA project: the Mammalian Gene Collection (MGC).</title>
        <authorList>
            <consortium name="The MGC Project Team"/>
        </authorList>
    </citation>
    <scope>NUCLEOTIDE SEQUENCE [LARGE SCALE MRNA]</scope>
</reference>
<reference key="4">
    <citation type="submission" date="2001-06" db="EMBL/GenBank/DDBJ databases">
        <title>Completely sequenced partial cDNA clone from a human heart library.</title>
        <authorList>
            <person name="Patzak D."/>
        </authorList>
    </citation>
    <scope>NUCLEOTIDE SEQUENCE [MRNA] OF 1362-1395</scope>
    <source>
        <tissue>Heart</tissue>
    </source>
</reference>
<reference key="5">
    <citation type="journal article" date="2002" name="Science">
        <title>Modulation of postendocytic sorting of G protein-coupled receptors.</title>
        <authorList>
            <person name="Whistler J.L."/>
            <person name="Enquist J."/>
            <person name="Marley A."/>
            <person name="Fong J."/>
            <person name="Gladher F."/>
            <person name="Tsuruda P."/>
            <person name="Murray S.R."/>
            <person name="Von Zastrow M."/>
        </authorList>
    </citation>
    <scope>FUNCTION</scope>
    <scope>INTERACTION WITH OPRD1; ADRB2 AND DRD4</scope>
    <scope>DOMAIN OPRD1-BINDING</scope>
    <scope>TISSUE SPECIFICITY</scope>
</reference>
<reference key="6">
    <citation type="journal article" date="2004" name="J. Biol. Chem.">
        <title>A library of 7TM receptor C-terminal tails. Interactions with the proposed post-endocytic sorting proteins ERM-binding phosphoprotein 50 (EBP50), N-ethylmaleimide-sensitive factor (NSF), sorting nexin 1 (SNX1), and G protein-coupled receptor-associated sorting protein (GASP).</title>
        <authorList>
            <person name="Heydorn A."/>
            <person name="Soendergaard B.P."/>
            <person name="Ersboell B."/>
            <person name="Holst B."/>
            <person name="Nielsen F.C."/>
            <person name="Haft C.R."/>
            <person name="Whistler J."/>
            <person name="Schwartz T.W."/>
        </authorList>
    </citation>
    <scope>FUNCTION</scope>
    <scope>INTERACTION WITH G PROTEIN-COUPLED RECEPTORS</scope>
    <scope>SUBCELLULAR LOCATION</scope>
</reference>
<reference key="7">
    <citation type="journal article" date="2004" name="J. Neurochem.">
        <title>Identification of a novel family of G protein-coupled receptor associated sorting proteins.</title>
        <authorList>
            <person name="Simonin F."/>
            <person name="Karcher P."/>
            <person name="Boeuf J.J.-M."/>
            <person name="Matifas A."/>
            <person name="Kieffer B.L."/>
        </authorList>
    </citation>
    <scope>TISSUE SPECIFICITY</scope>
    <scope>INTERACTION WITH OPRD1</scope>
</reference>
<reference key="8">
    <citation type="journal article" date="2013" name="Cell">
        <title>Beclin 2 functions in autophagy, degradation of G protein-coupled receptors, and metabolism.</title>
        <authorList>
            <person name="He C."/>
            <person name="Wei Y."/>
            <person name="Sun K."/>
            <person name="Li B."/>
            <person name="Dong X."/>
            <person name="Zou Z."/>
            <person name="Liu Y."/>
            <person name="Kinch L.N."/>
            <person name="Khan S."/>
            <person name="Sinha S."/>
            <person name="Xavier R.J."/>
            <person name="Grishin N.V."/>
            <person name="Xiao G."/>
            <person name="Eskelinen E.L."/>
            <person name="Scherer P.E."/>
            <person name="Whistler J.L."/>
            <person name="Levine B."/>
        </authorList>
    </citation>
    <scope>FUNCTION</scope>
    <scope>INTERACTION WITH BECN2</scope>
</reference>
<comment type="function">
    <text evidence="5 7 8">Modulates lysosomal sorting and functional down-regulation of a variety of G-protein coupled receptors. Targets receptors for degradation in lysosomes via its interaction with BECN2.</text>
</comment>
<comment type="subunit">
    <text evidence="1 5 6 7 8">Interacts with cytoplasmic tails of a variety of G-protein coupled receptors such as D2 dopamine receptor/DRD2 (By similarity), delta opioid receptor/OPRD1, beta-2 adrenergic receptor/ADRB2 and D4 dopamine receptor/DRD4. Interacts with PER1. Interacts with BECN2; the interaction is direct.</text>
</comment>
<comment type="interaction">
    <interactant intactId="EBI-2514717">
        <id>Q5JY77</id>
    </interactant>
    <interactant intactId="EBI-8839517">
        <id>A8MW95</id>
        <label>BECN2</label>
    </interactant>
    <organismsDiffer>false</organismsDiffer>
    <experiments>4</experiments>
</comment>
<comment type="interaction">
    <interactant intactId="EBI-2514717">
        <id>Q5JY77</id>
    </interactant>
    <interactant intactId="EBI-2624456">
        <id>P41143</id>
        <label>OPRD1</label>
    </interactant>
    <organismsDiffer>false</organismsDiffer>
    <experiments>2</experiments>
</comment>
<comment type="subcellular location">
    <subcellularLocation>
        <location evidence="7">Cytoplasm</location>
    </subcellularLocation>
</comment>
<comment type="tissue specificity">
    <text evidence="5 6">Expressed in the brain, with lower expression in medulla, spinal cord and substantia nigra.</text>
</comment>
<comment type="similarity">
    <text evidence="10">Belongs to the GPRASP family.</text>
</comment>
<comment type="sequence caution" evidence="10">
    <conflict type="erroneous initiation">
        <sequence resource="EMBL-CDS" id="BAA23715"/>
    </conflict>
</comment>
<keyword id="KW-0963">Cytoplasm</keyword>
<keyword id="KW-0597">Phosphoprotein</keyword>
<keyword id="KW-1267">Proteomics identification</keyword>
<keyword id="KW-1185">Reference proteome</keyword>
<protein>
    <recommendedName>
        <fullName>G-protein coupled receptor-associated sorting protein 1</fullName>
        <shortName>GASP-1</shortName>
    </recommendedName>
</protein>
<feature type="chain" id="PRO_0000239050" description="G-protein coupled receptor-associated sorting protein 1">
    <location>
        <begin position="1"/>
        <end position="1395"/>
    </location>
</feature>
<feature type="region of interest" description="Disordered" evidence="4">
    <location>
        <begin position="1"/>
        <end position="25"/>
    </location>
</feature>
<feature type="region of interest" description="Disordered" evidence="4">
    <location>
        <begin position="45"/>
        <end position="83"/>
    </location>
</feature>
<feature type="region of interest" description="Disordered" evidence="4">
    <location>
        <begin position="269"/>
        <end position="288"/>
    </location>
</feature>
<feature type="region of interest" description="Disordered" evidence="4">
    <location>
        <begin position="446"/>
        <end position="469"/>
    </location>
</feature>
<feature type="region of interest" description="OPRD1-binding">
    <location>
        <begin position="899"/>
        <end position="1395"/>
    </location>
</feature>
<feature type="compositionally biased region" description="Basic and acidic residues" evidence="4">
    <location>
        <begin position="269"/>
        <end position="281"/>
    </location>
</feature>
<feature type="compositionally biased region" description="Basic and acidic residues" evidence="4">
    <location>
        <begin position="457"/>
        <end position="469"/>
    </location>
</feature>
<feature type="modified residue" description="Phosphoserine" evidence="2">
    <location>
        <position position="297"/>
    </location>
</feature>
<feature type="modified residue" description="Phosphoserine" evidence="2">
    <location>
        <position position="631"/>
    </location>
</feature>
<feature type="modified residue" description="Phosphoserine" evidence="3">
    <location>
        <position position="899"/>
    </location>
</feature>
<feature type="sequence variant" id="VAR_026579" description="In dbSNP:rs17339512." evidence="9">
    <original>A</original>
    <variation>G</variation>
    <location>
        <position position="315"/>
    </location>
</feature>
<feature type="sequence variant" id="VAR_049263" description="In dbSNP:rs17292748.">
    <original>I</original>
    <variation>V</variation>
    <location>
        <position position="779"/>
    </location>
</feature>
<feature type="sequence variant" id="VAR_049264" description="In dbSNP:rs2235804.">
    <original>P</original>
    <variation>S</variation>
    <location>
        <position position="1093"/>
    </location>
</feature>
<dbReference type="EMBL" id="AB007903">
    <property type="protein sequence ID" value="BAA23715.3"/>
    <property type="status" value="ALT_INIT"/>
    <property type="molecule type" value="mRNA"/>
</dbReference>
<dbReference type="EMBL" id="AL035427">
    <property type="status" value="NOT_ANNOTATED_CDS"/>
    <property type="molecule type" value="Genomic_DNA"/>
</dbReference>
<dbReference type="EMBL" id="BC114552">
    <property type="protein sequence ID" value="AAI14553.1"/>
    <property type="molecule type" value="mRNA"/>
</dbReference>
<dbReference type="EMBL" id="AY044233">
    <property type="protein sequence ID" value="AAK95578.1"/>
    <property type="molecule type" value="mRNA"/>
</dbReference>
<dbReference type="CCDS" id="CCDS35352.1"/>
<dbReference type="PIR" id="T00068">
    <property type="entry name" value="T00068"/>
</dbReference>
<dbReference type="RefSeq" id="NP_001092880.1">
    <property type="nucleotide sequence ID" value="NM_001099410.2"/>
</dbReference>
<dbReference type="RefSeq" id="NP_001092881.1">
    <property type="nucleotide sequence ID" value="NM_001099411.2"/>
</dbReference>
<dbReference type="RefSeq" id="NP_001171656.1">
    <property type="nucleotide sequence ID" value="NM_001184727.2"/>
</dbReference>
<dbReference type="RefSeq" id="NP_055525.3">
    <property type="nucleotide sequence ID" value="NM_014710.5"/>
</dbReference>
<dbReference type="RefSeq" id="XP_016885470.1">
    <property type="nucleotide sequence ID" value="XM_017029981.1"/>
</dbReference>
<dbReference type="RefSeq" id="XP_016885471.1">
    <property type="nucleotide sequence ID" value="XM_017029982.1"/>
</dbReference>
<dbReference type="SMR" id="Q5JY77"/>
<dbReference type="BioGRID" id="115086">
    <property type="interactions" value="38"/>
</dbReference>
<dbReference type="CORUM" id="Q5JY77"/>
<dbReference type="FunCoup" id="Q5JY77">
    <property type="interactions" value="216"/>
</dbReference>
<dbReference type="IntAct" id="Q5JY77">
    <property type="interactions" value="26"/>
</dbReference>
<dbReference type="STRING" id="9606.ENSP00000498934"/>
<dbReference type="GlyGen" id="Q5JY77">
    <property type="glycosylation" value="1 site, 1 O-linked glycan (1 site)"/>
</dbReference>
<dbReference type="iPTMnet" id="Q5JY77"/>
<dbReference type="PhosphoSitePlus" id="Q5JY77"/>
<dbReference type="BioMuta" id="GPRASP1"/>
<dbReference type="DMDM" id="126302546"/>
<dbReference type="jPOST" id="Q5JY77"/>
<dbReference type="MassIVE" id="Q5JY77"/>
<dbReference type="PaxDb" id="9606-ENSP00000445683"/>
<dbReference type="PeptideAtlas" id="Q5JY77"/>
<dbReference type="ProteomicsDB" id="63484"/>
<dbReference type="Antibodypedia" id="383">
    <property type="antibodies" value="130 antibodies from 29 providers"/>
</dbReference>
<dbReference type="DNASU" id="9737"/>
<dbReference type="Ensembl" id="ENST00000361600.9">
    <property type="protein sequence ID" value="ENSP00000355146.4"/>
    <property type="gene ID" value="ENSG00000198932.13"/>
</dbReference>
<dbReference type="Ensembl" id="ENST00000415986.5">
    <property type="protein sequence ID" value="ENSP00000393691.1"/>
    <property type="gene ID" value="ENSG00000198932.13"/>
</dbReference>
<dbReference type="Ensembl" id="ENST00000444152.5">
    <property type="protein sequence ID" value="ENSP00000409420.1"/>
    <property type="gene ID" value="ENSG00000198932.13"/>
</dbReference>
<dbReference type="Ensembl" id="ENST00000537097.2">
    <property type="protein sequence ID" value="ENSP00000445683.1"/>
    <property type="gene ID" value="ENSG00000198932.13"/>
</dbReference>
<dbReference type="Ensembl" id="ENST00000652542.1">
    <property type="protein sequence ID" value="ENSP00000498934.1"/>
    <property type="gene ID" value="ENSG00000198932.13"/>
</dbReference>
<dbReference type="GeneID" id="9737"/>
<dbReference type="KEGG" id="hsa:9737"/>
<dbReference type="MANE-Select" id="ENST00000537097.2">
    <property type="protein sequence ID" value="ENSP00000445683.1"/>
    <property type="RefSeq nucleotide sequence ID" value="NM_001184727.2"/>
    <property type="RefSeq protein sequence ID" value="NP_001171656.1"/>
</dbReference>
<dbReference type="UCSC" id="uc004eji.5">
    <property type="organism name" value="human"/>
</dbReference>
<dbReference type="AGR" id="HGNC:24834"/>
<dbReference type="CTD" id="9737"/>
<dbReference type="DisGeNET" id="9737"/>
<dbReference type="GeneCards" id="GPRASP1"/>
<dbReference type="HGNC" id="HGNC:24834">
    <property type="gene designation" value="GPRASP1"/>
</dbReference>
<dbReference type="HPA" id="ENSG00000198932">
    <property type="expression patterns" value="Tissue enhanced (brain)"/>
</dbReference>
<dbReference type="MIM" id="300417">
    <property type="type" value="gene"/>
</dbReference>
<dbReference type="neXtProt" id="NX_Q5JY77"/>
<dbReference type="OpenTargets" id="ENSG00000198932"/>
<dbReference type="PharmGKB" id="PA134970616"/>
<dbReference type="VEuPathDB" id="HostDB:ENSG00000198932"/>
<dbReference type="eggNOG" id="ENOG502S6CE">
    <property type="taxonomic scope" value="Eukaryota"/>
</dbReference>
<dbReference type="GeneTree" id="ENSGT00940000163396"/>
<dbReference type="HOGENOM" id="CLU_008490_0_0_1"/>
<dbReference type="InParanoid" id="Q5JY77"/>
<dbReference type="OMA" id="WFWATEE"/>
<dbReference type="OrthoDB" id="9664939at2759"/>
<dbReference type="PAN-GO" id="Q5JY77">
    <property type="GO annotations" value="2 GO annotations based on evolutionary models"/>
</dbReference>
<dbReference type="PhylomeDB" id="Q5JY77"/>
<dbReference type="TreeFam" id="TF335652"/>
<dbReference type="PathwayCommons" id="Q5JY77"/>
<dbReference type="SignaLink" id="Q5JY77"/>
<dbReference type="BioGRID-ORCS" id="9737">
    <property type="hits" value="14 hits in 773 CRISPR screens"/>
</dbReference>
<dbReference type="GeneWiki" id="GPRASP1_(gene)"/>
<dbReference type="GenomeRNAi" id="9737"/>
<dbReference type="Pharos" id="Q5JY77">
    <property type="development level" value="Tbio"/>
</dbReference>
<dbReference type="PRO" id="PR:Q5JY77"/>
<dbReference type="Proteomes" id="UP000005640">
    <property type="component" value="Chromosome X"/>
</dbReference>
<dbReference type="RNAct" id="Q5JY77">
    <property type="molecule type" value="protein"/>
</dbReference>
<dbReference type="Bgee" id="ENSG00000198932">
    <property type="expression patterns" value="Expressed in middle temporal gyrus and 192 other cell types or tissues"/>
</dbReference>
<dbReference type="GO" id="GO:0005829">
    <property type="term" value="C:cytosol"/>
    <property type="evidence" value="ECO:0000314"/>
    <property type="project" value="HPA"/>
</dbReference>
<dbReference type="GO" id="GO:0005634">
    <property type="term" value="C:nucleus"/>
    <property type="evidence" value="ECO:0000318"/>
    <property type="project" value="GO_Central"/>
</dbReference>
<dbReference type="GO" id="GO:0008333">
    <property type="term" value="P:endosome to lysosome transport"/>
    <property type="evidence" value="ECO:0000315"/>
    <property type="project" value="UniProtKB"/>
</dbReference>
<dbReference type="GO" id="GO:1990172">
    <property type="term" value="P:G protein-coupled receptor catabolic process"/>
    <property type="evidence" value="ECO:0000315"/>
    <property type="project" value="UniProtKB"/>
</dbReference>
<dbReference type="FunFam" id="1.25.10.10:FF:000258">
    <property type="entry name" value="G-protein coupled receptor-associated sorting protein 2"/>
    <property type="match status" value="1"/>
</dbReference>
<dbReference type="Gene3D" id="1.25.10.10">
    <property type="entry name" value="Leucine-rich Repeat Variant"/>
    <property type="match status" value="1"/>
</dbReference>
<dbReference type="InterPro" id="IPR011989">
    <property type="entry name" value="ARM-like"/>
</dbReference>
<dbReference type="InterPro" id="IPR006911">
    <property type="entry name" value="ARM-rpt_dom"/>
</dbReference>
<dbReference type="InterPro" id="IPR016024">
    <property type="entry name" value="ARM-type_fold"/>
</dbReference>
<dbReference type="InterPro" id="IPR043374">
    <property type="entry name" value="GASP1-3"/>
</dbReference>
<dbReference type="PANTHER" id="PTHR46414:SF3">
    <property type="entry name" value="G-PROTEIN COUPLED RECEPTOR-ASSOCIATED SORTING PROTEIN 1"/>
    <property type="match status" value="1"/>
</dbReference>
<dbReference type="PANTHER" id="PTHR46414">
    <property type="entry name" value="PROTEIN BHLHB9-RELATED"/>
    <property type="match status" value="1"/>
</dbReference>
<dbReference type="Pfam" id="PF04826">
    <property type="entry name" value="Arm_2"/>
    <property type="match status" value="1"/>
</dbReference>
<dbReference type="SUPFAM" id="SSF48371">
    <property type="entry name" value="ARM repeat"/>
    <property type="match status" value="1"/>
</dbReference>
<name>GASP1_HUMAN</name>
<evidence type="ECO:0000250" key="1"/>
<evidence type="ECO:0000250" key="2">
    <source>
        <dbReference type="UniProtKB" id="Q5U4C1"/>
    </source>
</evidence>
<evidence type="ECO:0000250" key="3">
    <source>
        <dbReference type="UniProtKB" id="Q920R4"/>
    </source>
</evidence>
<evidence type="ECO:0000256" key="4">
    <source>
        <dbReference type="SAM" id="MobiDB-lite"/>
    </source>
</evidence>
<evidence type="ECO:0000269" key="5">
    <source>
    </source>
</evidence>
<evidence type="ECO:0000269" key="6">
    <source>
    </source>
</evidence>
<evidence type="ECO:0000269" key="7">
    <source>
    </source>
</evidence>
<evidence type="ECO:0000269" key="8">
    <source>
    </source>
</evidence>
<evidence type="ECO:0000269" key="9">
    <source>
    </source>
</evidence>
<evidence type="ECO:0000305" key="10"/>